<comment type="function">
    <text evidence="1">Involved in the biogenesis of the 60S ribosomal subunit. May play a part in the quality control of pre-60S particles (By similarity).</text>
</comment>
<comment type="subunit">
    <text evidence="2">Component of the pre-66S ribosomal particle. Interacts with NOP7 and RRP1. Interacts with RSA4 (via WD repeats).</text>
</comment>
<comment type="subcellular location">
    <subcellularLocation>
        <location evidence="1">Nucleus</location>
        <location evidence="1">Nucleolus</location>
    </subcellularLocation>
</comment>
<comment type="similarity">
    <text evidence="5">Belongs to the eukaryotic ribosomal protein eS8 family. Ribosome biogenesis protein NSA2 subfamily.</text>
</comment>
<protein>
    <recommendedName>
        <fullName>Ribosome biogenesis protein NSA2</fullName>
    </recommendedName>
</protein>
<keyword id="KW-0539">Nucleus</keyword>
<keyword id="KW-1185">Reference proteome</keyword>
<keyword id="KW-0687">Ribonucleoprotein</keyword>
<keyword id="KW-0690">Ribosome biogenesis</keyword>
<keyword id="KW-0698">rRNA processing</keyword>
<feature type="chain" id="PRO_0000320416" description="Ribosome biogenesis protein NSA2">
    <location>
        <begin position="1"/>
        <end position="261"/>
    </location>
</feature>
<feature type="region of interest" description="Disordered" evidence="4">
    <location>
        <begin position="1"/>
        <end position="34"/>
    </location>
</feature>
<feature type="region of interest" description="Disordered" evidence="4">
    <location>
        <begin position="61"/>
        <end position="85"/>
    </location>
</feature>
<feature type="short sequence motif" description="Nuclear localization signal 1" evidence="3">
    <location>
        <begin position="15"/>
        <end position="22"/>
    </location>
</feature>
<feature type="short sequence motif" description="Nuclear localization signal 2" evidence="3">
    <location>
        <begin position="51"/>
        <end position="58"/>
    </location>
</feature>
<feature type="compositionally biased region" description="Basic and acidic residues" evidence="4">
    <location>
        <begin position="7"/>
        <end position="34"/>
    </location>
</feature>
<organism>
    <name type="scientific">Debaryomyces hansenii (strain ATCC 36239 / CBS 767 / BCRC 21394 / JCM 1990 / NBRC 0083 / IGC 2968)</name>
    <name type="common">Yeast</name>
    <name type="synonym">Torulaspora hansenii</name>
    <dbReference type="NCBI Taxonomy" id="284592"/>
    <lineage>
        <taxon>Eukaryota</taxon>
        <taxon>Fungi</taxon>
        <taxon>Dikarya</taxon>
        <taxon>Ascomycota</taxon>
        <taxon>Saccharomycotina</taxon>
        <taxon>Pichiomycetes</taxon>
        <taxon>Debaryomycetaceae</taxon>
        <taxon>Debaryomyces</taxon>
    </lineage>
</organism>
<evidence type="ECO:0000250" key="1"/>
<evidence type="ECO:0000250" key="2">
    <source>
        <dbReference type="UniProtKB" id="P40078"/>
    </source>
</evidence>
<evidence type="ECO:0000255" key="3">
    <source>
        <dbReference type="PROSITE-ProRule" id="PRU00768"/>
    </source>
</evidence>
<evidence type="ECO:0000256" key="4">
    <source>
        <dbReference type="SAM" id="MobiDB-lite"/>
    </source>
</evidence>
<evidence type="ECO:0000305" key="5"/>
<proteinExistence type="inferred from homology"/>
<gene>
    <name type="primary">NSA2</name>
    <name type="ordered locus">DEHA2C14322g</name>
</gene>
<sequence>MPQNEYIEQHIKQHGRRLDYEERKRKKAAREGHRIAKDAQELKGWRGKQFAKKRYSEKVAMKKKIKTHQESKVKGPATPKEDDGEALPTYLLDRQTNNSAKAISSSIKQKRLEKADKFAVPLPRVKGISEEEMFKVIKTGKQKSKAWKRMITKHTFVGEGFTRRPVKMERIIRPSALRQKKANVTHPELAVTVFLPILGVKKNPQSPMYTQLGVLTKGTIIEVNVSELGLVTAGGKVVWGKYAQITNEPDRDGCVNAVLLV</sequence>
<name>NSA2_DEBHA</name>
<accession>Q6BU14</accession>
<reference key="1">
    <citation type="journal article" date="2004" name="Nature">
        <title>Genome evolution in yeasts.</title>
        <authorList>
            <person name="Dujon B."/>
            <person name="Sherman D."/>
            <person name="Fischer G."/>
            <person name="Durrens P."/>
            <person name="Casaregola S."/>
            <person name="Lafontaine I."/>
            <person name="de Montigny J."/>
            <person name="Marck C."/>
            <person name="Neuveglise C."/>
            <person name="Talla E."/>
            <person name="Goffard N."/>
            <person name="Frangeul L."/>
            <person name="Aigle M."/>
            <person name="Anthouard V."/>
            <person name="Babour A."/>
            <person name="Barbe V."/>
            <person name="Barnay S."/>
            <person name="Blanchin S."/>
            <person name="Beckerich J.-M."/>
            <person name="Beyne E."/>
            <person name="Bleykasten C."/>
            <person name="Boisrame A."/>
            <person name="Boyer J."/>
            <person name="Cattolico L."/>
            <person name="Confanioleri F."/>
            <person name="de Daruvar A."/>
            <person name="Despons L."/>
            <person name="Fabre E."/>
            <person name="Fairhead C."/>
            <person name="Ferry-Dumazet H."/>
            <person name="Groppi A."/>
            <person name="Hantraye F."/>
            <person name="Hennequin C."/>
            <person name="Jauniaux N."/>
            <person name="Joyet P."/>
            <person name="Kachouri R."/>
            <person name="Kerrest A."/>
            <person name="Koszul R."/>
            <person name="Lemaire M."/>
            <person name="Lesur I."/>
            <person name="Ma L."/>
            <person name="Muller H."/>
            <person name="Nicaud J.-M."/>
            <person name="Nikolski M."/>
            <person name="Oztas S."/>
            <person name="Ozier-Kalogeropoulos O."/>
            <person name="Pellenz S."/>
            <person name="Potier S."/>
            <person name="Richard G.-F."/>
            <person name="Straub M.-L."/>
            <person name="Suleau A."/>
            <person name="Swennen D."/>
            <person name="Tekaia F."/>
            <person name="Wesolowski-Louvel M."/>
            <person name="Westhof E."/>
            <person name="Wirth B."/>
            <person name="Zeniou-Meyer M."/>
            <person name="Zivanovic Y."/>
            <person name="Bolotin-Fukuhara M."/>
            <person name="Thierry A."/>
            <person name="Bouchier C."/>
            <person name="Caudron B."/>
            <person name="Scarpelli C."/>
            <person name="Gaillardin C."/>
            <person name="Weissenbach J."/>
            <person name="Wincker P."/>
            <person name="Souciet J.-L."/>
        </authorList>
    </citation>
    <scope>NUCLEOTIDE SEQUENCE [LARGE SCALE GENOMIC DNA]</scope>
    <source>
        <strain>ATCC 36239 / CBS 767 / BCRC 21394 / JCM 1990 / NBRC 0083 / IGC 2968</strain>
    </source>
</reference>
<dbReference type="EMBL" id="CR382135">
    <property type="protein sequence ID" value="CAG86383.1"/>
    <property type="molecule type" value="Genomic_DNA"/>
</dbReference>
<dbReference type="RefSeq" id="XP_458305.1">
    <property type="nucleotide sequence ID" value="XM_458305.1"/>
</dbReference>
<dbReference type="SMR" id="Q6BU14"/>
<dbReference type="FunCoup" id="Q6BU14">
    <property type="interactions" value="1285"/>
</dbReference>
<dbReference type="STRING" id="284592.Q6BU14"/>
<dbReference type="GeneID" id="2900320"/>
<dbReference type="KEGG" id="dha:DEHA2C14322g"/>
<dbReference type="VEuPathDB" id="FungiDB:DEHA2C14322g"/>
<dbReference type="eggNOG" id="KOG3163">
    <property type="taxonomic scope" value="Eukaryota"/>
</dbReference>
<dbReference type="HOGENOM" id="CLU_1070048_0_0_1"/>
<dbReference type="InParanoid" id="Q6BU14"/>
<dbReference type="OMA" id="TNTPEND"/>
<dbReference type="OrthoDB" id="1847590at2759"/>
<dbReference type="Proteomes" id="UP000000599">
    <property type="component" value="Chromosome C"/>
</dbReference>
<dbReference type="GO" id="GO:0005730">
    <property type="term" value="C:nucleolus"/>
    <property type="evidence" value="ECO:0007669"/>
    <property type="project" value="UniProtKB-SubCell"/>
</dbReference>
<dbReference type="GO" id="GO:0030687">
    <property type="term" value="C:preribosome, large subunit precursor"/>
    <property type="evidence" value="ECO:0007669"/>
    <property type="project" value="EnsemblFungi"/>
</dbReference>
<dbReference type="GO" id="GO:0000466">
    <property type="term" value="P:maturation of 5.8S rRNA from tricistronic rRNA transcript (SSU-rRNA, 5.8S rRNA, LSU-rRNA)"/>
    <property type="evidence" value="ECO:0007669"/>
    <property type="project" value="EnsemblFungi"/>
</dbReference>
<dbReference type="GO" id="GO:0000463">
    <property type="term" value="P:maturation of LSU-rRNA from tricistronic rRNA transcript (SSU-rRNA, 5.8S rRNA, LSU-rRNA)"/>
    <property type="evidence" value="ECO:0007669"/>
    <property type="project" value="EnsemblFungi"/>
</dbReference>
<dbReference type="CDD" id="cd11381">
    <property type="entry name" value="NSA2"/>
    <property type="match status" value="1"/>
</dbReference>
<dbReference type="FunFam" id="2.40.10.310:FF:000001">
    <property type="entry name" value="NSA2, ribosome biogenesis homolog"/>
    <property type="match status" value="1"/>
</dbReference>
<dbReference type="Gene3D" id="2.40.10.310">
    <property type="match status" value="1"/>
</dbReference>
<dbReference type="InterPro" id="IPR039411">
    <property type="entry name" value="NSA2_fam"/>
</dbReference>
<dbReference type="InterPro" id="IPR022309">
    <property type="entry name" value="Ribosomal_Se8/biogenesis_NSA2"/>
</dbReference>
<dbReference type="PANTHER" id="PTHR12642">
    <property type="entry name" value="RIBOSOME BIOGENESIS PROTEIN NSA2 HOMOLOG"/>
    <property type="match status" value="1"/>
</dbReference>
<dbReference type="Pfam" id="PF01201">
    <property type="entry name" value="Ribosomal_S8e"/>
    <property type="match status" value="1"/>
</dbReference>